<evidence type="ECO:0000250" key="1"/>
<evidence type="ECO:0000305" key="2"/>
<organism>
    <name type="scientific">Xenopus tropicalis</name>
    <name type="common">Western clawed frog</name>
    <name type="synonym">Silurana tropicalis</name>
    <dbReference type="NCBI Taxonomy" id="8364"/>
    <lineage>
        <taxon>Eukaryota</taxon>
        <taxon>Metazoa</taxon>
        <taxon>Chordata</taxon>
        <taxon>Craniata</taxon>
        <taxon>Vertebrata</taxon>
        <taxon>Euteleostomi</taxon>
        <taxon>Amphibia</taxon>
        <taxon>Batrachia</taxon>
        <taxon>Anura</taxon>
        <taxon>Pipoidea</taxon>
        <taxon>Pipidae</taxon>
        <taxon>Xenopodinae</taxon>
        <taxon>Xenopus</taxon>
        <taxon>Silurana</taxon>
    </lineage>
</organism>
<protein>
    <recommendedName>
        <fullName>TATA box-binding protein-like 1</fullName>
        <shortName>TBP-like 1</shortName>
    </recommendedName>
    <alternativeName>
        <fullName>TATA box-binding protein-related factor 2</fullName>
        <shortName>TBP-related factor 2</shortName>
    </alternativeName>
    <alternativeName>
        <fullName>TBP-like factor</fullName>
    </alternativeName>
</protein>
<feature type="chain" id="PRO_0000293550" description="TATA box-binding protein-like 1">
    <location>
        <begin position="1"/>
        <end position="186"/>
    </location>
</feature>
<dbReference type="EMBL" id="CR760634">
    <property type="protein sequence ID" value="CAJ81743.1"/>
    <property type="molecule type" value="mRNA"/>
</dbReference>
<dbReference type="EMBL" id="BC075401">
    <property type="protein sequence ID" value="AAH75401.1"/>
    <property type="molecule type" value="mRNA"/>
</dbReference>
<dbReference type="RefSeq" id="NP_001004932.1">
    <property type="nucleotide sequence ID" value="NM_001004932.1"/>
</dbReference>
<dbReference type="SMR" id="Q6DIY4"/>
<dbReference type="FunCoup" id="Q6DIY4">
    <property type="interactions" value="1163"/>
</dbReference>
<dbReference type="STRING" id="8364.ENSXETP00000014481"/>
<dbReference type="PaxDb" id="8364-ENSXETP00000000222"/>
<dbReference type="GeneID" id="448323"/>
<dbReference type="KEGG" id="xtr:448323"/>
<dbReference type="AGR" id="Xenbase:XB-GENE-488460"/>
<dbReference type="CTD" id="9519"/>
<dbReference type="Xenbase" id="XB-GENE-488460">
    <property type="gene designation" value="tbpl1"/>
</dbReference>
<dbReference type="eggNOG" id="KOG3302">
    <property type="taxonomic scope" value="Eukaryota"/>
</dbReference>
<dbReference type="HOGENOM" id="CLU_060161_4_1_1"/>
<dbReference type="InParanoid" id="Q6DIY4"/>
<dbReference type="OMA" id="NCEYEPE"/>
<dbReference type="OrthoDB" id="2127950at2759"/>
<dbReference type="PhylomeDB" id="Q6DIY4"/>
<dbReference type="TreeFam" id="TF300102"/>
<dbReference type="Proteomes" id="UP000008143">
    <property type="component" value="Chromosome 5"/>
</dbReference>
<dbReference type="Bgee" id="ENSXETG00000000116">
    <property type="expression patterns" value="Expressed in egg cell and 12 other cell types or tissues"/>
</dbReference>
<dbReference type="GO" id="GO:0005737">
    <property type="term" value="C:cytoplasm"/>
    <property type="evidence" value="ECO:0000250"/>
    <property type="project" value="UniProtKB"/>
</dbReference>
<dbReference type="GO" id="GO:0005634">
    <property type="term" value="C:nucleus"/>
    <property type="evidence" value="ECO:0000250"/>
    <property type="project" value="UniProtKB"/>
</dbReference>
<dbReference type="GO" id="GO:0003677">
    <property type="term" value="F:DNA binding"/>
    <property type="evidence" value="ECO:0007669"/>
    <property type="project" value="UniProtKB-KW"/>
</dbReference>
<dbReference type="GO" id="GO:0006352">
    <property type="term" value="P:DNA-templated transcription initiation"/>
    <property type="evidence" value="ECO:0007669"/>
    <property type="project" value="InterPro"/>
</dbReference>
<dbReference type="GO" id="GO:0009792">
    <property type="term" value="P:embryo development ending in birth or egg hatching"/>
    <property type="evidence" value="ECO:0000250"/>
    <property type="project" value="UniProtKB"/>
</dbReference>
<dbReference type="GO" id="GO:0006366">
    <property type="term" value="P:transcription by RNA polymerase II"/>
    <property type="evidence" value="ECO:0000250"/>
    <property type="project" value="UniProtKB"/>
</dbReference>
<dbReference type="CDD" id="cd04517">
    <property type="entry name" value="TLF"/>
    <property type="match status" value="1"/>
</dbReference>
<dbReference type="FunFam" id="3.30.310.10:FF:000005">
    <property type="entry name" value="TATA box-binding protein-like 1"/>
    <property type="match status" value="1"/>
</dbReference>
<dbReference type="FunFam" id="3.30.310.10:FF:000009">
    <property type="entry name" value="TatA box-binding protein-like protein 1"/>
    <property type="match status" value="1"/>
</dbReference>
<dbReference type="Gene3D" id="3.30.310.10">
    <property type="entry name" value="TATA-Binding Protein"/>
    <property type="match status" value="2"/>
</dbReference>
<dbReference type="InterPro" id="IPR000814">
    <property type="entry name" value="TBP"/>
</dbReference>
<dbReference type="InterPro" id="IPR015445">
    <property type="entry name" value="TBP-like"/>
</dbReference>
<dbReference type="InterPro" id="IPR012295">
    <property type="entry name" value="TBP_dom_sf"/>
</dbReference>
<dbReference type="PANTHER" id="PTHR10126">
    <property type="entry name" value="TATA-BOX BINDING PROTEIN"/>
    <property type="match status" value="1"/>
</dbReference>
<dbReference type="Pfam" id="PF00352">
    <property type="entry name" value="TBP"/>
    <property type="match status" value="2"/>
</dbReference>
<dbReference type="PRINTS" id="PR00686">
    <property type="entry name" value="TIFACTORIID"/>
</dbReference>
<dbReference type="SUPFAM" id="SSF55945">
    <property type="entry name" value="TATA-box binding protein-like"/>
    <property type="match status" value="2"/>
</dbReference>
<name>TBPL1_XENTR</name>
<sequence length="186" mass="20902">MDADSDVALDIIITNVVCVFRTRCHLNLRKIALEGLNVIYKREVGKVLMKLRKPRITATIWSSGKIICTGATSEEEAKVGARRLARSLQKLGFQVKFTEFKVVNVLAVCTMPFEIRLAEFTKQNRPHASYEPELHPAVCYRIKSLRTTLQIFSTGSITVTGPDVKSVATAIEQIYPFVFESRKAIL</sequence>
<proteinExistence type="evidence at transcript level"/>
<comment type="function">
    <text evidence="1">Part of a specialized transcription system that mediates the transcription of most ribosomal proteins through the 5'-TCT-3' motif which is a core promoter element at these genes. Seems to also mediate the transcription of NF1. Does not bind the TATA box. Members of the TBP family are differentially required to regulate transcription and development during early embryogenesis. Particularly regulates genes that have a role in catabolism (By similarity).</text>
</comment>
<comment type="subcellular location">
    <subcellularLocation>
        <location evidence="1">Cytoplasm</location>
    </subcellularLocation>
    <subcellularLocation>
        <location evidence="1">Nucleus</location>
    </subcellularLocation>
</comment>
<comment type="similarity">
    <text evidence="2">Belongs to the TBP family.</text>
</comment>
<reference key="1">
    <citation type="submission" date="2006-10" db="EMBL/GenBank/DDBJ databases">
        <authorList>
            <consortium name="Sanger Xenopus tropicalis EST/cDNA project"/>
        </authorList>
    </citation>
    <scope>NUCLEOTIDE SEQUENCE [LARGE SCALE MRNA]</scope>
    <source>
        <tissue>Egg</tissue>
    </source>
</reference>
<reference key="2">
    <citation type="submission" date="2004-06" db="EMBL/GenBank/DDBJ databases">
        <authorList>
            <consortium name="NIH - Xenopus Gene Collection (XGC) project"/>
        </authorList>
    </citation>
    <scope>NUCLEOTIDE SEQUENCE [LARGE SCALE MRNA]</scope>
    <source>
        <tissue>Egg</tissue>
    </source>
</reference>
<reference key="3">
    <citation type="journal article" date="2007" name="DNA Cell Biol.">
        <title>Genomics, evolution, and expression of TBPL2, a member of the TBP family.</title>
        <authorList>
            <person name="Di Pietro C."/>
            <person name="Ragusa M."/>
            <person name="Duro L."/>
            <person name="Guglielmino M.R."/>
            <person name="Barbagallo D."/>
            <person name="Carnemolla A."/>
            <person name="Lagana A."/>
            <person name="Buffa P."/>
            <person name="Angelica R."/>
            <person name="Rinaldi A."/>
            <person name="Calafato M.S."/>
            <person name="Milicia I."/>
            <person name="Caserta C."/>
            <person name="Giugno R."/>
            <person name="Pulvirenti A."/>
            <person name="Giunta V."/>
            <person name="Rapisarda A."/>
            <person name="Di Pietro V."/>
            <person name="Grillo A."/>
            <person name="Messina A."/>
            <person name="Ferro A."/>
            <person name="Grzeschik K.H."/>
            <person name="Purrello M."/>
        </authorList>
    </citation>
    <scope>IDENTIFICATION AS TBPL1</scope>
</reference>
<gene>
    <name type="primary">tbpl1</name>
    <name type="synonym">tlf</name>
    <name type="synonym">trf2</name>
    <name type="ORF">TEgg016a11.1</name>
</gene>
<accession>Q6DIY4</accession>
<keyword id="KW-0963">Cytoplasm</keyword>
<keyword id="KW-0217">Developmental protein</keyword>
<keyword id="KW-0238">DNA-binding</keyword>
<keyword id="KW-0539">Nucleus</keyword>
<keyword id="KW-1185">Reference proteome</keyword>
<keyword id="KW-0804">Transcription</keyword>
<keyword id="KW-0805">Transcription regulation</keyword>